<name>TRMD_THIDA</name>
<feature type="chain" id="PRO_0000257487" description="tRNA (guanine-N(1)-)-methyltransferase">
    <location>
        <begin position="1"/>
        <end position="236"/>
    </location>
</feature>
<feature type="binding site" evidence="1">
    <location>
        <position position="116"/>
    </location>
    <ligand>
        <name>S-adenosyl-L-methionine</name>
        <dbReference type="ChEBI" id="CHEBI:59789"/>
    </ligand>
</feature>
<feature type="binding site" evidence="1">
    <location>
        <begin position="136"/>
        <end position="141"/>
    </location>
    <ligand>
        <name>S-adenosyl-L-methionine</name>
        <dbReference type="ChEBI" id="CHEBI:59789"/>
    </ligand>
</feature>
<protein>
    <recommendedName>
        <fullName evidence="1">tRNA (guanine-N(1)-)-methyltransferase</fullName>
        <ecNumber evidence="1">2.1.1.228</ecNumber>
    </recommendedName>
    <alternativeName>
        <fullName evidence="1">M1G-methyltransferase</fullName>
    </alternativeName>
    <alternativeName>
        <fullName evidence="1">tRNA [GM37] methyltransferase</fullName>
    </alternativeName>
</protein>
<sequence>MRFDAVTLFAEMFDAVLDYGITRRALDRGLYRFKSWNPRAFTDDPHRTVDDRPYGGGPGMLMLAEPLDRALNAVQQELASENLAPWVVHFSPRGRPLTQQRVMELKDMPALVLLCGRYEGIDERLLQRRVDEEVSLGDFVLSGGELPALALMDAIVRQLPGALNDAESAAQDSFSAGLLDCPHYTRPEVWQGMAVPQVLKSGNHAAIAKWRHEQSLRLTGALRPDLLERAQHDERN</sequence>
<reference key="1">
    <citation type="journal article" date="2006" name="J. Bacteriol.">
        <title>The genome sequence of the obligately chemolithoautotrophic, facultatively anaerobic bacterium Thiobacillus denitrificans.</title>
        <authorList>
            <person name="Beller H.R."/>
            <person name="Chain P.S."/>
            <person name="Letain T.E."/>
            <person name="Chakicherla A."/>
            <person name="Larimer F.W."/>
            <person name="Richardson P.M."/>
            <person name="Coleman M.A."/>
            <person name="Wood A.P."/>
            <person name="Kelly D.P."/>
        </authorList>
    </citation>
    <scope>NUCLEOTIDE SEQUENCE [LARGE SCALE GENOMIC DNA]</scope>
    <source>
        <strain>ATCC 25259 / T1</strain>
    </source>
</reference>
<proteinExistence type="inferred from homology"/>
<accession>Q3SGC2</accession>
<keyword id="KW-0963">Cytoplasm</keyword>
<keyword id="KW-0489">Methyltransferase</keyword>
<keyword id="KW-1185">Reference proteome</keyword>
<keyword id="KW-0949">S-adenosyl-L-methionine</keyword>
<keyword id="KW-0808">Transferase</keyword>
<keyword id="KW-0819">tRNA processing</keyword>
<organism>
    <name type="scientific">Thiobacillus denitrificans (strain ATCC 25259 / T1)</name>
    <dbReference type="NCBI Taxonomy" id="292415"/>
    <lineage>
        <taxon>Bacteria</taxon>
        <taxon>Pseudomonadati</taxon>
        <taxon>Pseudomonadota</taxon>
        <taxon>Betaproteobacteria</taxon>
        <taxon>Nitrosomonadales</taxon>
        <taxon>Thiobacillaceae</taxon>
        <taxon>Thiobacillus</taxon>
    </lineage>
</organism>
<evidence type="ECO:0000255" key="1">
    <source>
        <dbReference type="HAMAP-Rule" id="MF_00605"/>
    </source>
</evidence>
<dbReference type="EC" id="2.1.1.228" evidence="1"/>
<dbReference type="EMBL" id="CP000116">
    <property type="protein sequence ID" value="AAZ98328.1"/>
    <property type="molecule type" value="Genomic_DNA"/>
</dbReference>
<dbReference type="RefSeq" id="WP_011312887.1">
    <property type="nucleotide sequence ID" value="NC_007404.1"/>
</dbReference>
<dbReference type="SMR" id="Q3SGC2"/>
<dbReference type="STRING" id="292415.Tbd_2375"/>
<dbReference type="KEGG" id="tbd:Tbd_2375"/>
<dbReference type="eggNOG" id="COG0336">
    <property type="taxonomic scope" value="Bacteria"/>
</dbReference>
<dbReference type="HOGENOM" id="CLU_047363_0_2_4"/>
<dbReference type="OrthoDB" id="9807416at2"/>
<dbReference type="Proteomes" id="UP000008291">
    <property type="component" value="Chromosome"/>
</dbReference>
<dbReference type="GO" id="GO:0005829">
    <property type="term" value="C:cytosol"/>
    <property type="evidence" value="ECO:0007669"/>
    <property type="project" value="TreeGrafter"/>
</dbReference>
<dbReference type="GO" id="GO:0052906">
    <property type="term" value="F:tRNA (guanine(37)-N1)-methyltransferase activity"/>
    <property type="evidence" value="ECO:0007669"/>
    <property type="project" value="UniProtKB-UniRule"/>
</dbReference>
<dbReference type="GO" id="GO:0002939">
    <property type="term" value="P:tRNA N1-guanine methylation"/>
    <property type="evidence" value="ECO:0007669"/>
    <property type="project" value="TreeGrafter"/>
</dbReference>
<dbReference type="CDD" id="cd18080">
    <property type="entry name" value="TrmD-like"/>
    <property type="match status" value="1"/>
</dbReference>
<dbReference type="FunFam" id="1.10.1270.20:FF:000001">
    <property type="entry name" value="tRNA (guanine-N(1)-)-methyltransferase"/>
    <property type="match status" value="1"/>
</dbReference>
<dbReference type="FunFam" id="3.40.1280.10:FF:000001">
    <property type="entry name" value="tRNA (guanine-N(1)-)-methyltransferase"/>
    <property type="match status" value="1"/>
</dbReference>
<dbReference type="Gene3D" id="3.40.1280.10">
    <property type="match status" value="1"/>
</dbReference>
<dbReference type="Gene3D" id="1.10.1270.20">
    <property type="entry name" value="tRNA(m1g37)methyltransferase, domain 2"/>
    <property type="match status" value="1"/>
</dbReference>
<dbReference type="HAMAP" id="MF_00605">
    <property type="entry name" value="TrmD"/>
    <property type="match status" value="1"/>
</dbReference>
<dbReference type="InterPro" id="IPR029028">
    <property type="entry name" value="Alpha/beta_knot_MTases"/>
</dbReference>
<dbReference type="InterPro" id="IPR023148">
    <property type="entry name" value="tRNA_m1G_MeTrfase_C_sf"/>
</dbReference>
<dbReference type="InterPro" id="IPR002649">
    <property type="entry name" value="tRNA_m1G_MeTrfase_TrmD"/>
</dbReference>
<dbReference type="InterPro" id="IPR029026">
    <property type="entry name" value="tRNA_m1G_MTases_N"/>
</dbReference>
<dbReference type="InterPro" id="IPR016009">
    <property type="entry name" value="tRNA_MeTrfase_TRMD/TRM10"/>
</dbReference>
<dbReference type="NCBIfam" id="NF000648">
    <property type="entry name" value="PRK00026.1"/>
    <property type="match status" value="1"/>
</dbReference>
<dbReference type="NCBIfam" id="TIGR00088">
    <property type="entry name" value="trmD"/>
    <property type="match status" value="1"/>
</dbReference>
<dbReference type="PANTHER" id="PTHR46417">
    <property type="entry name" value="TRNA (GUANINE-N(1)-)-METHYLTRANSFERASE"/>
    <property type="match status" value="1"/>
</dbReference>
<dbReference type="PANTHER" id="PTHR46417:SF1">
    <property type="entry name" value="TRNA (GUANINE-N(1)-)-METHYLTRANSFERASE"/>
    <property type="match status" value="1"/>
</dbReference>
<dbReference type="Pfam" id="PF01746">
    <property type="entry name" value="tRNA_m1G_MT"/>
    <property type="match status" value="1"/>
</dbReference>
<dbReference type="PIRSF" id="PIRSF000386">
    <property type="entry name" value="tRNA_mtase"/>
    <property type="match status" value="1"/>
</dbReference>
<dbReference type="SUPFAM" id="SSF75217">
    <property type="entry name" value="alpha/beta knot"/>
    <property type="match status" value="1"/>
</dbReference>
<gene>
    <name evidence="1" type="primary">trmD</name>
    <name type="ordered locus">Tbd_2375</name>
</gene>
<comment type="function">
    <text evidence="1">Specifically methylates guanosine-37 in various tRNAs.</text>
</comment>
<comment type="catalytic activity">
    <reaction evidence="1">
        <text>guanosine(37) in tRNA + S-adenosyl-L-methionine = N(1)-methylguanosine(37) in tRNA + S-adenosyl-L-homocysteine + H(+)</text>
        <dbReference type="Rhea" id="RHEA:36899"/>
        <dbReference type="Rhea" id="RHEA-COMP:10145"/>
        <dbReference type="Rhea" id="RHEA-COMP:10147"/>
        <dbReference type="ChEBI" id="CHEBI:15378"/>
        <dbReference type="ChEBI" id="CHEBI:57856"/>
        <dbReference type="ChEBI" id="CHEBI:59789"/>
        <dbReference type="ChEBI" id="CHEBI:73542"/>
        <dbReference type="ChEBI" id="CHEBI:74269"/>
        <dbReference type="EC" id="2.1.1.228"/>
    </reaction>
</comment>
<comment type="subunit">
    <text evidence="1">Homodimer.</text>
</comment>
<comment type="subcellular location">
    <subcellularLocation>
        <location evidence="1">Cytoplasm</location>
    </subcellularLocation>
</comment>
<comment type="similarity">
    <text evidence="1">Belongs to the RNA methyltransferase TrmD family.</text>
</comment>